<name>PSRP_BORBR</name>
<feature type="chain" id="PRO_0000196635" description="Putative phosphoenolpyruvate synthase regulatory protein">
    <location>
        <begin position="1"/>
        <end position="275"/>
    </location>
</feature>
<feature type="binding site" evidence="1">
    <location>
        <begin position="157"/>
        <end position="164"/>
    </location>
    <ligand>
        <name>ADP</name>
        <dbReference type="ChEBI" id="CHEBI:456216"/>
    </ligand>
</feature>
<comment type="function">
    <text evidence="1">Bifunctional serine/threonine kinase and phosphorylase involved in the regulation of the phosphoenolpyruvate synthase (PEPS) by catalyzing its phosphorylation/dephosphorylation.</text>
</comment>
<comment type="catalytic activity">
    <reaction evidence="1">
        <text>[pyruvate, water dikinase] + ADP = [pyruvate, water dikinase]-phosphate + AMP + H(+)</text>
        <dbReference type="Rhea" id="RHEA:46020"/>
        <dbReference type="Rhea" id="RHEA-COMP:11425"/>
        <dbReference type="Rhea" id="RHEA-COMP:11426"/>
        <dbReference type="ChEBI" id="CHEBI:15378"/>
        <dbReference type="ChEBI" id="CHEBI:43176"/>
        <dbReference type="ChEBI" id="CHEBI:68546"/>
        <dbReference type="ChEBI" id="CHEBI:456215"/>
        <dbReference type="ChEBI" id="CHEBI:456216"/>
        <dbReference type="EC" id="2.7.11.33"/>
    </reaction>
</comment>
<comment type="catalytic activity">
    <reaction evidence="1">
        <text>[pyruvate, water dikinase]-phosphate + phosphate + H(+) = [pyruvate, water dikinase] + diphosphate</text>
        <dbReference type="Rhea" id="RHEA:48580"/>
        <dbReference type="Rhea" id="RHEA-COMP:11425"/>
        <dbReference type="Rhea" id="RHEA-COMP:11426"/>
        <dbReference type="ChEBI" id="CHEBI:15378"/>
        <dbReference type="ChEBI" id="CHEBI:33019"/>
        <dbReference type="ChEBI" id="CHEBI:43176"/>
        <dbReference type="ChEBI" id="CHEBI:43474"/>
        <dbReference type="ChEBI" id="CHEBI:68546"/>
        <dbReference type="EC" id="2.7.4.28"/>
    </reaction>
</comment>
<comment type="similarity">
    <text evidence="1">Belongs to the pyruvate, phosphate/water dikinase regulatory protein family. PSRP subfamily.</text>
</comment>
<gene>
    <name type="ordered locus">BB2621</name>
</gene>
<keyword id="KW-0418">Kinase</keyword>
<keyword id="KW-0547">Nucleotide-binding</keyword>
<keyword id="KW-0723">Serine/threonine-protein kinase</keyword>
<keyword id="KW-0808">Transferase</keyword>
<evidence type="ECO:0000255" key="1">
    <source>
        <dbReference type="HAMAP-Rule" id="MF_01062"/>
    </source>
</evidence>
<protein>
    <recommendedName>
        <fullName evidence="1">Putative phosphoenolpyruvate synthase regulatory protein</fullName>
        <shortName evidence="1">PEP synthase regulatory protein</shortName>
        <shortName evidence="1">PSRP</shortName>
        <ecNumber evidence="1">2.7.11.33</ecNumber>
        <ecNumber evidence="1">2.7.4.28</ecNumber>
    </recommendedName>
    <alternativeName>
        <fullName evidence="1">Pyruvate, water dikinase regulatory protein</fullName>
    </alternativeName>
</protein>
<organism>
    <name type="scientific">Bordetella bronchiseptica (strain ATCC BAA-588 / NCTC 13252 / RB50)</name>
    <name type="common">Alcaligenes bronchisepticus</name>
    <dbReference type="NCBI Taxonomy" id="257310"/>
    <lineage>
        <taxon>Bacteria</taxon>
        <taxon>Pseudomonadati</taxon>
        <taxon>Pseudomonadota</taxon>
        <taxon>Betaproteobacteria</taxon>
        <taxon>Burkholderiales</taxon>
        <taxon>Alcaligenaceae</taxon>
        <taxon>Bordetella</taxon>
    </lineage>
</organism>
<proteinExistence type="inferred from homology"/>
<reference key="1">
    <citation type="journal article" date="2003" name="Nat. Genet.">
        <title>Comparative analysis of the genome sequences of Bordetella pertussis, Bordetella parapertussis and Bordetella bronchiseptica.</title>
        <authorList>
            <person name="Parkhill J."/>
            <person name="Sebaihia M."/>
            <person name="Preston A."/>
            <person name="Murphy L.D."/>
            <person name="Thomson N.R."/>
            <person name="Harris D.E."/>
            <person name="Holden M.T.G."/>
            <person name="Churcher C.M."/>
            <person name="Bentley S.D."/>
            <person name="Mungall K.L."/>
            <person name="Cerdeno-Tarraga A.-M."/>
            <person name="Temple L."/>
            <person name="James K.D."/>
            <person name="Harris B."/>
            <person name="Quail M.A."/>
            <person name="Achtman M."/>
            <person name="Atkin R."/>
            <person name="Baker S."/>
            <person name="Basham D."/>
            <person name="Bason N."/>
            <person name="Cherevach I."/>
            <person name="Chillingworth T."/>
            <person name="Collins M."/>
            <person name="Cronin A."/>
            <person name="Davis P."/>
            <person name="Doggett J."/>
            <person name="Feltwell T."/>
            <person name="Goble A."/>
            <person name="Hamlin N."/>
            <person name="Hauser H."/>
            <person name="Holroyd S."/>
            <person name="Jagels K."/>
            <person name="Leather S."/>
            <person name="Moule S."/>
            <person name="Norberczak H."/>
            <person name="O'Neil S."/>
            <person name="Ormond D."/>
            <person name="Price C."/>
            <person name="Rabbinowitsch E."/>
            <person name="Rutter S."/>
            <person name="Sanders M."/>
            <person name="Saunders D."/>
            <person name="Seeger K."/>
            <person name="Sharp S."/>
            <person name="Simmonds M."/>
            <person name="Skelton J."/>
            <person name="Squares R."/>
            <person name="Squares S."/>
            <person name="Stevens K."/>
            <person name="Unwin L."/>
            <person name="Whitehead S."/>
            <person name="Barrell B.G."/>
            <person name="Maskell D.J."/>
        </authorList>
    </citation>
    <scope>NUCLEOTIDE SEQUENCE [LARGE SCALE GENOMIC DNA]</scope>
    <source>
        <strain>ATCC BAA-588 / NCTC 13252 / RB50</strain>
    </source>
</reference>
<dbReference type="EC" id="2.7.11.33" evidence="1"/>
<dbReference type="EC" id="2.7.4.28" evidence="1"/>
<dbReference type="EMBL" id="BX640444">
    <property type="protein sequence ID" value="CAE33114.1"/>
    <property type="molecule type" value="Genomic_DNA"/>
</dbReference>
<dbReference type="RefSeq" id="WP_003811765.1">
    <property type="nucleotide sequence ID" value="NC_002927.3"/>
</dbReference>
<dbReference type="SMR" id="Q7WJ78"/>
<dbReference type="KEGG" id="bbr:BB2621"/>
<dbReference type="eggNOG" id="COG1806">
    <property type="taxonomic scope" value="Bacteria"/>
</dbReference>
<dbReference type="HOGENOM" id="CLU_046206_1_0_4"/>
<dbReference type="Proteomes" id="UP000001027">
    <property type="component" value="Chromosome"/>
</dbReference>
<dbReference type="GO" id="GO:0043531">
    <property type="term" value="F:ADP binding"/>
    <property type="evidence" value="ECO:0007669"/>
    <property type="project" value="UniProtKB-UniRule"/>
</dbReference>
<dbReference type="GO" id="GO:0005524">
    <property type="term" value="F:ATP binding"/>
    <property type="evidence" value="ECO:0007669"/>
    <property type="project" value="InterPro"/>
</dbReference>
<dbReference type="GO" id="GO:0016776">
    <property type="term" value="F:phosphotransferase activity, phosphate group as acceptor"/>
    <property type="evidence" value="ECO:0007669"/>
    <property type="project" value="UniProtKB-UniRule"/>
</dbReference>
<dbReference type="GO" id="GO:0004674">
    <property type="term" value="F:protein serine/threonine kinase activity"/>
    <property type="evidence" value="ECO:0007669"/>
    <property type="project" value="UniProtKB-UniRule"/>
</dbReference>
<dbReference type="HAMAP" id="MF_01062">
    <property type="entry name" value="PSRP"/>
    <property type="match status" value="1"/>
</dbReference>
<dbReference type="InterPro" id="IPR005177">
    <property type="entry name" value="Kinase-pyrophosphorylase"/>
</dbReference>
<dbReference type="InterPro" id="IPR026530">
    <property type="entry name" value="PSRP"/>
</dbReference>
<dbReference type="NCBIfam" id="NF003742">
    <property type="entry name" value="PRK05339.1"/>
    <property type="match status" value="1"/>
</dbReference>
<dbReference type="PANTHER" id="PTHR31756">
    <property type="entry name" value="PYRUVATE, PHOSPHATE DIKINASE REGULATORY PROTEIN 1, CHLOROPLASTIC"/>
    <property type="match status" value="1"/>
</dbReference>
<dbReference type="PANTHER" id="PTHR31756:SF3">
    <property type="entry name" value="PYRUVATE, PHOSPHATE DIKINASE REGULATORY PROTEIN 1, CHLOROPLASTIC"/>
    <property type="match status" value="1"/>
</dbReference>
<dbReference type="Pfam" id="PF03618">
    <property type="entry name" value="Kinase-PPPase"/>
    <property type="match status" value="1"/>
</dbReference>
<accession>Q7WJ78</accession>
<sequence length="275" mass="30712">MTSTPIERAVYIVSDSTGITAETFSHSVLSQFDEVNFKPVRLPFIDTLDKAREVVARINRNALEAGVPPIVFSTLVNPEILALVRQSNGVFLDLFGTFVSHIEQALGLKSSHSIGRSHMAANSEKYRNRIDAINFSLAHDDGQFVNQLDQADVILVGVSRCGKTPTSLYLAMQYAVKAANFPLTPDDFERGALPKTIAPYRGKLFGLSIQPERLAEVRNERRPNSHYARLEQCRYEVAEAERMMRREGISWLSTTTKSIEEIATTVLQEVGLERV</sequence>